<name>ERPA_ECO57</name>
<comment type="function">
    <text evidence="1">Required for insertion of 4Fe-4S clusters for at least IspG.</text>
</comment>
<comment type="cofactor">
    <cofactor evidence="1">
        <name>iron-sulfur cluster</name>
        <dbReference type="ChEBI" id="CHEBI:30408"/>
    </cofactor>
    <text evidence="1">Binds 1 iron-sulfur cluster per subunit.</text>
</comment>
<comment type="subunit">
    <text evidence="1">Homodimer.</text>
</comment>
<comment type="similarity">
    <text evidence="1">Belongs to the HesB/IscA family.</text>
</comment>
<keyword id="KW-0408">Iron</keyword>
<keyword id="KW-0411">Iron-sulfur</keyword>
<keyword id="KW-0479">Metal-binding</keyword>
<keyword id="KW-1185">Reference proteome</keyword>
<organism>
    <name type="scientific">Escherichia coli O157:H7</name>
    <dbReference type="NCBI Taxonomy" id="83334"/>
    <lineage>
        <taxon>Bacteria</taxon>
        <taxon>Pseudomonadati</taxon>
        <taxon>Pseudomonadota</taxon>
        <taxon>Gammaproteobacteria</taxon>
        <taxon>Enterobacterales</taxon>
        <taxon>Enterobacteriaceae</taxon>
        <taxon>Escherichia</taxon>
    </lineage>
</organism>
<reference key="1">
    <citation type="journal article" date="2001" name="Nature">
        <title>Genome sequence of enterohaemorrhagic Escherichia coli O157:H7.</title>
        <authorList>
            <person name="Perna N.T."/>
            <person name="Plunkett G. III"/>
            <person name="Burland V."/>
            <person name="Mau B."/>
            <person name="Glasner J.D."/>
            <person name="Rose D.J."/>
            <person name="Mayhew G.F."/>
            <person name="Evans P.S."/>
            <person name="Gregor J."/>
            <person name="Kirkpatrick H.A."/>
            <person name="Posfai G."/>
            <person name="Hackett J."/>
            <person name="Klink S."/>
            <person name="Boutin A."/>
            <person name="Shao Y."/>
            <person name="Miller L."/>
            <person name="Grotbeck E.J."/>
            <person name="Davis N.W."/>
            <person name="Lim A."/>
            <person name="Dimalanta E.T."/>
            <person name="Potamousis K."/>
            <person name="Apodaca J."/>
            <person name="Anantharaman T.S."/>
            <person name="Lin J."/>
            <person name="Yen G."/>
            <person name="Schwartz D.C."/>
            <person name="Welch R.A."/>
            <person name="Blattner F.R."/>
        </authorList>
    </citation>
    <scope>NUCLEOTIDE SEQUENCE [LARGE SCALE GENOMIC DNA]</scope>
    <source>
        <strain>O157:H7 / EDL933 / ATCC 700927 / EHEC</strain>
    </source>
</reference>
<reference key="2">
    <citation type="journal article" date="2001" name="DNA Res.">
        <title>Complete genome sequence of enterohemorrhagic Escherichia coli O157:H7 and genomic comparison with a laboratory strain K-12.</title>
        <authorList>
            <person name="Hayashi T."/>
            <person name="Makino K."/>
            <person name="Ohnishi M."/>
            <person name="Kurokawa K."/>
            <person name="Ishii K."/>
            <person name="Yokoyama K."/>
            <person name="Han C.-G."/>
            <person name="Ohtsubo E."/>
            <person name="Nakayama K."/>
            <person name="Murata T."/>
            <person name="Tanaka M."/>
            <person name="Tobe T."/>
            <person name="Iida T."/>
            <person name="Takami H."/>
            <person name="Honda T."/>
            <person name="Sasakawa C."/>
            <person name="Ogasawara N."/>
            <person name="Yasunaga T."/>
            <person name="Kuhara S."/>
            <person name="Shiba T."/>
            <person name="Hattori M."/>
            <person name="Shinagawa H."/>
        </authorList>
    </citation>
    <scope>NUCLEOTIDE SEQUENCE [LARGE SCALE GENOMIC DNA]</scope>
    <source>
        <strain>O157:H7 / Sakai / RIMD 0509952 / EHEC</strain>
    </source>
</reference>
<protein>
    <recommendedName>
        <fullName evidence="1">Iron-sulfur cluster insertion protein ErpA</fullName>
    </recommendedName>
</protein>
<proteinExistence type="inferred from homology"/>
<accession>P0ACC5</accession>
<accession>P37026</accession>
<dbReference type="EMBL" id="AE005174">
    <property type="protein sequence ID" value="AAG54460.1"/>
    <property type="molecule type" value="Genomic_DNA"/>
</dbReference>
<dbReference type="EMBL" id="BA000007">
    <property type="protein sequence ID" value="BAB33583.1"/>
    <property type="molecule type" value="Genomic_DNA"/>
</dbReference>
<dbReference type="PIR" id="H85499">
    <property type="entry name" value="H85499"/>
</dbReference>
<dbReference type="PIR" id="H90648">
    <property type="entry name" value="H90648"/>
</dbReference>
<dbReference type="RefSeq" id="NP_308187.1">
    <property type="nucleotide sequence ID" value="NC_002695.1"/>
</dbReference>
<dbReference type="RefSeq" id="WP_001295564.1">
    <property type="nucleotide sequence ID" value="NZ_VOAI01000002.1"/>
</dbReference>
<dbReference type="SMR" id="P0ACC5"/>
<dbReference type="STRING" id="155864.Z0167"/>
<dbReference type="GeneID" id="913801"/>
<dbReference type="GeneID" id="93777270"/>
<dbReference type="KEGG" id="ece:Z0167"/>
<dbReference type="KEGG" id="ecs:ECs_0160"/>
<dbReference type="PATRIC" id="fig|386585.9.peg.260"/>
<dbReference type="eggNOG" id="COG0316">
    <property type="taxonomic scope" value="Bacteria"/>
</dbReference>
<dbReference type="HOGENOM" id="CLU_069054_5_3_6"/>
<dbReference type="OMA" id="LYIYGMQ"/>
<dbReference type="Proteomes" id="UP000000558">
    <property type="component" value="Chromosome"/>
</dbReference>
<dbReference type="Proteomes" id="UP000002519">
    <property type="component" value="Chromosome"/>
</dbReference>
<dbReference type="GO" id="GO:0005829">
    <property type="term" value="C:cytosol"/>
    <property type="evidence" value="ECO:0007669"/>
    <property type="project" value="TreeGrafter"/>
</dbReference>
<dbReference type="GO" id="GO:0051537">
    <property type="term" value="F:2 iron, 2 sulfur cluster binding"/>
    <property type="evidence" value="ECO:0007669"/>
    <property type="project" value="TreeGrafter"/>
</dbReference>
<dbReference type="GO" id="GO:0051539">
    <property type="term" value="F:4 iron, 4 sulfur cluster binding"/>
    <property type="evidence" value="ECO:0007669"/>
    <property type="project" value="TreeGrafter"/>
</dbReference>
<dbReference type="GO" id="GO:0005506">
    <property type="term" value="F:iron ion binding"/>
    <property type="evidence" value="ECO:0007669"/>
    <property type="project" value="UniProtKB-UniRule"/>
</dbReference>
<dbReference type="GO" id="GO:0016226">
    <property type="term" value="P:iron-sulfur cluster assembly"/>
    <property type="evidence" value="ECO:0007669"/>
    <property type="project" value="UniProtKB-UniRule"/>
</dbReference>
<dbReference type="FunFam" id="2.60.300.12:FF:000002">
    <property type="entry name" value="Iron-sulfur cluster insertion protein ErpA"/>
    <property type="match status" value="1"/>
</dbReference>
<dbReference type="Gene3D" id="2.60.300.12">
    <property type="entry name" value="HesB-like domain"/>
    <property type="match status" value="1"/>
</dbReference>
<dbReference type="HAMAP" id="MF_01380">
    <property type="entry name" value="Fe_S_insert_ErpA"/>
    <property type="match status" value="1"/>
</dbReference>
<dbReference type="InterPro" id="IPR000361">
    <property type="entry name" value="FeS_biogenesis"/>
</dbReference>
<dbReference type="InterPro" id="IPR016092">
    <property type="entry name" value="FeS_cluster_insertion"/>
</dbReference>
<dbReference type="InterPro" id="IPR017870">
    <property type="entry name" value="FeS_cluster_insertion_CS"/>
</dbReference>
<dbReference type="InterPro" id="IPR023063">
    <property type="entry name" value="FeS_cluster_insertion_RrpA"/>
</dbReference>
<dbReference type="InterPro" id="IPR035903">
    <property type="entry name" value="HesB-like_dom_sf"/>
</dbReference>
<dbReference type="NCBIfam" id="TIGR00049">
    <property type="entry name" value="iron-sulfur cluster assembly accessory protein"/>
    <property type="match status" value="1"/>
</dbReference>
<dbReference type="NCBIfam" id="NF010147">
    <property type="entry name" value="PRK13623.1"/>
    <property type="match status" value="1"/>
</dbReference>
<dbReference type="PANTHER" id="PTHR43011">
    <property type="entry name" value="IRON-SULFUR CLUSTER ASSEMBLY 2 HOMOLOG, MITOCHONDRIAL"/>
    <property type="match status" value="1"/>
</dbReference>
<dbReference type="PANTHER" id="PTHR43011:SF1">
    <property type="entry name" value="IRON-SULFUR CLUSTER ASSEMBLY 2 HOMOLOG, MITOCHONDRIAL"/>
    <property type="match status" value="1"/>
</dbReference>
<dbReference type="Pfam" id="PF01521">
    <property type="entry name" value="Fe-S_biosyn"/>
    <property type="match status" value="1"/>
</dbReference>
<dbReference type="SUPFAM" id="SSF89360">
    <property type="entry name" value="HesB-like domain"/>
    <property type="match status" value="1"/>
</dbReference>
<dbReference type="PROSITE" id="PS01152">
    <property type="entry name" value="HESB"/>
    <property type="match status" value="1"/>
</dbReference>
<gene>
    <name evidence="1" type="primary">erpA</name>
    <name type="ordered locus">Z0167</name>
    <name type="ordered locus">ECs0160</name>
</gene>
<feature type="chain" id="PRO_0000076991" description="Iron-sulfur cluster insertion protein ErpA">
    <location>
        <begin position="1"/>
        <end position="114"/>
    </location>
</feature>
<feature type="binding site" evidence="1">
    <location>
        <position position="42"/>
    </location>
    <ligand>
        <name>iron-sulfur cluster</name>
        <dbReference type="ChEBI" id="CHEBI:30408"/>
    </ligand>
</feature>
<feature type="binding site" evidence="1">
    <location>
        <position position="106"/>
    </location>
    <ligand>
        <name>iron-sulfur cluster</name>
        <dbReference type="ChEBI" id="CHEBI:30408"/>
    </ligand>
</feature>
<feature type="binding site" evidence="1">
    <location>
        <position position="108"/>
    </location>
    <ligand>
        <name>iron-sulfur cluster</name>
        <dbReference type="ChEBI" id="CHEBI:30408"/>
    </ligand>
</feature>
<evidence type="ECO:0000255" key="1">
    <source>
        <dbReference type="HAMAP-Rule" id="MF_01380"/>
    </source>
</evidence>
<sequence>MSDDVALPLEFTDAAANKVKSLIADEDNPNLKLRVYITGGGCSGFQYGFTFDDQVNEGDMTIEKQGVGLVVDPMSLQYLVGGSVDYTEGLEGSRFIVTNPNAKSTCGCGSSFSI</sequence>